<reference key="1">
    <citation type="journal article" date="1997" name="Nature">
        <title>The complete genome sequence of the gastric pathogen Helicobacter pylori.</title>
        <authorList>
            <person name="Tomb J.-F."/>
            <person name="White O."/>
            <person name="Kerlavage A.R."/>
            <person name="Clayton R.A."/>
            <person name="Sutton G.G."/>
            <person name="Fleischmann R.D."/>
            <person name="Ketchum K.A."/>
            <person name="Klenk H.-P."/>
            <person name="Gill S.R."/>
            <person name="Dougherty B.A."/>
            <person name="Nelson K.E."/>
            <person name="Quackenbush J."/>
            <person name="Zhou L."/>
            <person name="Kirkness E.F."/>
            <person name="Peterson S.N."/>
            <person name="Loftus B.J."/>
            <person name="Richardson D.L."/>
            <person name="Dodson R.J."/>
            <person name="Khalak H.G."/>
            <person name="Glodek A."/>
            <person name="McKenney K."/>
            <person name="FitzGerald L.M."/>
            <person name="Lee N."/>
            <person name="Adams M.D."/>
            <person name="Hickey E.K."/>
            <person name="Berg D.E."/>
            <person name="Gocayne J.D."/>
            <person name="Utterback T.R."/>
            <person name="Peterson J.D."/>
            <person name="Kelley J.M."/>
            <person name="Cotton M.D."/>
            <person name="Weidman J.F."/>
            <person name="Fujii C."/>
            <person name="Bowman C."/>
            <person name="Watthey L."/>
            <person name="Wallin E."/>
            <person name="Hayes W.S."/>
            <person name="Borodovsky M."/>
            <person name="Karp P.D."/>
            <person name="Smith H.O."/>
            <person name="Fraser C.M."/>
            <person name="Venter J.C."/>
        </authorList>
    </citation>
    <scope>NUCLEOTIDE SEQUENCE [LARGE SCALE GENOMIC DNA]</scope>
    <source>
        <strain>ATCC 700392 / 26695</strain>
    </source>
</reference>
<keyword id="KW-0067">ATP-binding</keyword>
<keyword id="KW-0315">Glutamine amidotransferase</keyword>
<keyword id="KW-0436">Ligase</keyword>
<keyword id="KW-0460">Magnesium</keyword>
<keyword id="KW-0479">Metal-binding</keyword>
<keyword id="KW-0547">Nucleotide-binding</keyword>
<keyword id="KW-0665">Pyrimidine biosynthesis</keyword>
<keyword id="KW-1185">Reference proteome</keyword>
<proteinExistence type="inferred from homology"/>
<protein>
    <recommendedName>
        <fullName evidence="1">CTP synthase</fullName>
        <ecNumber evidence="1">6.3.4.2</ecNumber>
    </recommendedName>
    <alternativeName>
        <fullName evidence="1">Cytidine 5'-triphosphate synthase</fullName>
    </alternativeName>
    <alternativeName>
        <fullName evidence="1">Cytidine triphosphate synthetase</fullName>
        <shortName evidence="1">CTP synthetase</shortName>
        <shortName evidence="1">CTPS</shortName>
    </alternativeName>
    <alternativeName>
        <fullName evidence="1">UTP--ammonia ligase</fullName>
    </alternativeName>
</protein>
<organism>
    <name type="scientific">Helicobacter pylori (strain ATCC 700392 / 26695)</name>
    <name type="common">Campylobacter pylori</name>
    <dbReference type="NCBI Taxonomy" id="85962"/>
    <lineage>
        <taxon>Bacteria</taxon>
        <taxon>Pseudomonadati</taxon>
        <taxon>Campylobacterota</taxon>
        <taxon>Epsilonproteobacteria</taxon>
        <taxon>Campylobacterales</taxon>
        <taxon>Helicobacteraceae</taxon>
        <taxon>Helicobacter</taxon>
    </lineage>
</organism>
<comment type="function">
    <text evidence="1">Catalyzes the ATP-dependent amination of UTP to CTP with either L-glutamine or ammonia as the source of nitrogen. Regulates intracellular CTP levels through interactions with the four ribonucleotide triphosphates.</text>
</comment>
<comment type="catalytic activity">
    <reaction evidence="1">
        <text>UTP + L-glutamine + ATP + H2O = CTP + L-glutamate + ADP + phosphate + 2 H(+)</text>
        <dbReference type="Rhea" id="RHEA:26426"/>
        <dbReference type="ChEBI" id="CHEBI:15377"/>
        <dbReference type="ChEBI" id="CHEBI:15378"/>
        <dbReference type="ChEBI" id="CHEBI:29985"/>
        <dbReference type="ChEBI" id="CHEBI:30616"/>
        <dbReference type="ChEBI" id="CHEBI:37563"/>
        <dbReference type="ChEBI" id="CHEBI:43474"/>
        <dbReference type="ChEBI" id="CHEBI:46398"/>
        <dbReference type="ChEBI" id="CHEBI:58359"/>
        <dbReference type="ChEBI" id="CHEBI:456216"/>
        <dbReference type="EC" id="6.3.4.2"/>
    </reaction>
</comment>
<comment type="catalytic activity">
    <reaction evidence="1">
        <text>L-glutamine + H2O = L-glutamate + NH4(+)</text>
        <dbReference type="Rhea" id="RHEA:15889"/>
        <dbReference type="ChEBI" id="CHEBI:15377"/>
        <dbReference type="ChEBI" id="CHEBI:28938"/>
        <dbReference type="ChEBI" id="CHEBI:29985"/>
        <dbReference type="ChEBI" id="CHEBI:58359"/>
    </reaction>
</comment>
<comment type="catalytic activity">
    <reaction evidence="1">
        <text>UTP + NH4(+) + ATP = CTP + ADP + phosphate + 2 H(+)</text>
        <dbReference type="Rhea" id="RHEA:16597"/>
        <dbReference type="ChEBI" id="CHEBI:15378"/>
        <dbReference type="ChEBI" id="CHEBI:28938"/>
        <dbReference type="ChEBI" id="CHEBI:30616"/>
        <dbReference type="ChEBI" id="CHEBI:37563"/>
        <dbReference type="ChEBI" id="CHEBI:43474"/>
        <dbReference type="ChEBI" id="CHEBI:46398"/>
        <dbReference type="ChEBI" id="CHEBI:456216"/>
    </reaction>
</comment>
<comment type="activity regulation">
    <text evidence="1">Allosterically activated by GTP, when glutamine is the substrate; GTP has no effect on the reaction when ammonia is the substrate. The allosteric effector GTP functions by stabilizing the protein conformation that binds the tetrahedral intermediate(s) formed during glutamine hydrolysis. Inhibited by the product CTP, via allosteric rather than competitive inhibition.</text>
</comment>
<comment type="pathway">
    <text evidence="1">Pyrimidine metabolism; CTP biosynthesis via de novo pathway; CTP from UDP: step 2/2.</text>
</comment>
<comment type="subunit">
    <text evidence="1">Homotetramer.</text>
</comment>
<comment type="miscellaneous">
    <text evidence="1">CTPSs have evolved a hybrid strategy for distinguishing between UTP and CTP. The overlapping regions of the product feedback inhibitory and substrate sites recognize a common feature in both compounds, the triphosphate moiety. To differentiate isosteric substrate and product pyrimidine rings, an additional pocket far from the expected kinase/ligase catalytic site, specifically recognizes the cytosine and ribose portions of the product inhibitor.</text>
</comment>
<comment type="similarity">
    <text evidence="1">Belongs to the CTP synthase family.</text>
</comment>
<name>PYRG_HELPY</name>
<evidence type="ECO:0000255" key="1">
    <source>
        <dbReference type="HAMAP-Rule" id="MF_01227"/>
    </source>
</evidence>
<dbReference type="EC" id="6.3.4.2" evidence="1"/>
<dbReference type="EMBL" id="AE000511">
    <property type="protein sequence ID" value="AAD07406.1"/>
    <property type="molecule type" value="Genomic_DNA"/>
</dbReference>
<dbReference type="PIR" id="E64563">
    <property type="entry name" value="E64563"/>
</dbReference>
<dbReference type="RefSeq" id="NP_207147.1">
    <property type="nucleotide sequence ID" value="NC_000915.1"/>
</dbReference>
<dbReference type="RefSeq" id="WP_000373222.1">
    <property type="nucleotide sequence ID" value="NC_018939.1"/>
</dbReference>
<dbReference type="SMR" id="O25116"/>
<dbReference type="FunCoup" id="O25116">
    <property type="interactions" value="317"/>
</dbReference>
<dbReference type="IntAct" id="O25116">
    <property type="interactions" value="1"/>
</dbReference>
<dbReference type="MINT" id="O25116"/>
<dbReference type="STRING" id="85962.HP_0349"/>
<dbReference type="PaxDb" id="85962-C694_01770"/>
<dbReference type="EnsemblBacteria" id="AAD07406">
    <property type="protein sequence ID" value="AAD07406"/>
    <property type="gene ID" value="HP_0349"/>
</dbReference>
<dbReference type="KEGG" id="heo:C694_01770"/>
<dbReference type="KEGG" id="hpy:HP_0349"/>
<dbReference type="PATRIC" id="fig|85962.47.peg.372"/>
<dbReference type="eggNOG" id="COG0504">
    <property type="taxonomic scope" value="Bacteria"/>
</dbReference>
<dbReference type="InParanoid" id="O25116"/>
<dbReference type="OrthoDB" id="9801107at2"/>
<dbReference type="PhylomeDB" id="O25116"/>
<dbReference type="UniPathway" id="UPA00159">
    <property type="reaction ID" value="UER00277"/>
</dbReference>
<dbReference type="Proteomes" id="UP000000429">
    <property type="component" value="Chromosome"/>
</dbReference>
<dbReference type="GO" id="GO:0005829">
    <property type="term" value="C:cytosol"/>
    <property type="evidence" value="ECO:0000318"/>
    <property type="project" value="GO_Central"/>
</dbReference>
<dbReference type="GO" id="GO:0005524">
    <property type="term" value="F:ATP binding"/>
    <property type="evidence" value="ECO:0007669"/>
    <property type="project" value="UniProtKB-KW"/>
</dbReference>
<dbReference type="GO" id="GO:0003883">
    <property type="term" value="F:CTP synthase activity"/>
    <property type="evidence" value="ECO:0000318"/>
    <property type="project" value="GO_Central"/>
</dbReference>
<dbReference type="GO" id="GO:0004359">
    <property type="term" value="F:glutaminase activity"/>
    <property type="evidence" value="ECO:0007669"/>
    <property type="project" value="RHEA"/>
</dbReference>
<dbReference type="GO" id="GO:0042802">
    <property type="term" value="F:identical protein binding"/>
    <property type="evidence" value="ECO:0000318"/>
    <property type="project" value="GO_Central"/>
</dbReference>
<dbReference type="GO" id="GO:0046872">
    <property type="term" value="F:metal ion binding"/>
    <property type="evidence" value="ECO:0007669"/>
    <property type="project" value="UniProtKB-KW"/>
</dbReference>
<dbReference type="GO" id="GO:0044210">
    <property type="term" value="P:'de novo' CTP biosynthetic process"/>
    <property type="evidence" value="ECO:0007669"/>
    <property type="project" value="UniProtKB-UniRule"/>
</dbReference>
<dbReference type="GO" id="GO:0006241">
    <property type="term" value="P:CTP biosynthetic process"/>
    <property type="evidence" value="ECO:0000318"/>
    <property type="project" value="GO_Central"/>
</dbReference>
<dbReference type="GO" id="GO:0019856">
    <property type="term" value="P:pyrimidine nucleobase biosynthetic process"/>
    <property type="evidence" value="ECO:0000318"/>
    <property type="project" value="GO_Central"/>
</dbReference>
<dbReference type="CDD" id="cd03113">
    <property type="entry name" value="CTPS_N"/>
    <property type="match status" value="1"/>
</dbReference>
<dbReference type="CDD" id="cd01746">
    <property type="entry name" value="GATase1_CTP_Synthase"/>
    <property type="match status" value="1"/>
</dbReference>
<dbReference type="FunFam" id="3.40.50.300:FF:000009">
    <property type="entry name" value="CTP synthase"/>
    <property type="match status" value="1"/>
</dbReference>
<dbReference type="FunFam" id="3.40.50.880:FF:000002">
    <property type="entry name" value="CTP synthase"/>
    <property type="match status" value="1"/>
</dbReference>
<dbReference type="Gene3D" id="3.40.50.880">
    <property type="match status" value="1"/>
</dbReference>
<dbReference type="Gene3D" id="3.40.50.300">
    <property type="entry name" value="P-loop containing nucleotide triphosphate hydrolases"/>
    <property type="match status" value="1"/>
</dbReference>
<dbReference type="HAMAP" id="MF_01227">
    <property type="entry name" value="PyrG"/>
    <property type="match status" value="1"/>
</dbReference>
<dbReference type="InterPro" id="IPR029062">
    <property type="entry name" value="Class_I_gatase-like"/>
</dbReference>
<dbReference type="InterPro" id="IPR004468">
    <property type="entry name" value="CTP_synthase"/>
</dbReference>
<dbReference type="InterPro" id="IPR017456">
    <property type="entry name" value="CTP_synthase_N"/>
</dbReference>
<dbReference type="InterPro" id="IPR017926">
    <property type="entry name" value="GATASE"/>
</dbReference>
<dbReference type="InterPro" id="IPR033828">
    <property type="entry name" value="GATase1_CTP_Synthase"/>
</dbReference>
<dbReference type="InterPro" id="IPR027417">
    <property type="entry name" value="P-loop_NTPase"/>
</dbReference>
<dbReference type="NCBIfam" id="NF003792">
    <property type="entry name" value="PRK05380.1"/>
    <property type="match status" value="1"/>
</dbReference>
<dbReference type="NCBIfam" id="TIGR00337">
    <property type="entry name" value="PyrG"/>
    <property type="match status" value="1"/>
</dbReference>
<dbReference type="PANTHER" id="PTHR11550">
    <property type="entry name" value="CTP SYNTHASE"/>
    <property type="match status" value="1"/>
</dbReference>
<dbReference type="PANTHER" id="PTHR11550:SF0">
    <property type="entry name" value="CTP SYNTHASE-RELATED"/>
    <property type="match status" value="1"/>
</dbReference>
<dbReference type="Pfam" id="PF06418">
    <property type="entry name" value="CTP_synth_N"/>
    <property type="match status" value="1"/>
</dbReference>
<dbReference type="Pfam" id="PF00117">
    <property type="entry name" value="GATase"/>
    <property type="match status" value="1"/>
</dbReference>
<dbReference type="SUPFAM" id="SSF52317">
    <property type="entry name" value="Class I glutamine amidotransferase-like"/>
    <property type="match status" value="1"/>
</dbReference>
<dbReference type="SUPFAM" id="SSF52540">
    <property type="entry name" value="P-loop containing nucleoside triphosphate hydrolases"/>
    <property type="match status" value="1"/>
</dbReference>
<dbReference type="PROSITE" id="PS51273">
    <property type="entry name" value="GATASE_TYPE_1"/>
    <property type="match status" value="1"/>
</dbReference>
<gene>
    <name evidence="1" type="primary">pyrG</name>
    <name type="ordered locus">HP_0349</name>
</gene>
<sequence>MDRAKFIFVTGGVLSSLGKGISSSSIATLLQHCNYQVSILKIDPYINIDPGTMSPLEHGEVFVTSDGAETDLDIGHYERFLNRNLTRLNNFTTGQIFSSVIENERKGEYLGKTIQIVPHVTDEIKRRIKSAAKGLDFLIVEVGGTVGDMEGMFYLEAIRQLKLELGNEKVINVHVTLIPYIQTTNELKTKPTQHSVQELRRLGVTPQIILARSPKPLDKELKNKIALSCDVEQDSVIVATDTKSIYACPILFLQEGILTPIARRFNLNKLHPKMAAWNTLVEKIIAPKHKVKIGFVGKYLSLKESYKSLIEALIHAGAHLDTQVNIEWLDSENFNEKTDLEGVDAILVPGGFGERGIEGKICAIQRARLEKLPFLGICLGMQLAIVEFCRNVLGLKGANSTEFNQRCEYPVVYLIGDFMDQNHQKQVRTYNSPLGGTMRLGEYECEIMPNSLLEKAYKKPSIKERHRHRYEINPKYRQEWENKGLKVVGFGSNHLIEAIELEDHPFFVGVQFHPEFTSRLQSPNPIILDFIKSALSKS</sequence>
<feature type="chain" id="PRO_0000138189" description="CTP synthase">
    <location>
        <begin position="1"/>
        <end position="538"/>
    </location>
</feature>
<feature type="domain" description="Glutamine amidotransferase type-1" evidence="1">
    <location>
        <begin position="292"/>
        <end position="538"/>
    </location>
</feature>
<feature type="region of interest" description="Amidoligase domain" evidence="1">
    <location>
        <begin position="1"/>
        <end position="267"/>
    </location>
</feature>
<feature type="active site" description="Nucleophile; for glutamine hydrolysis" evidence="1">
    <location>
        <position position="378"/>
    </location>
</feature>
<feature type="active site" evidence="1">
    <location>
        <position position="513"/>
    </location>
</feature>
<feature type="active site" evidence="1">
    <location>
        <position position="515"/>
    </location>
</feature>
<feature type="binding site" evidence="1">
    <location>
        <position position="15"/>
    </location>
    <ligand>
        <name>CTP</name>
        <dbReference type="ChEBI" id="CHEBI:37563"/>
        <note>allosteric inhibitor</note>
    </ligand>
</feature>
<feature type="binding site" evidence="1">
    <location>
        <position position="15"/>
    </location>
    <ligand>
        <name>UTP</name>
        <dbReference type="ChEBI" id="CHEBI:46398"/>
    </ligand>
</feature>
<feature type="binding site" evidence="1">
    <location>
        <begin position="16"/>
        <end position="21"/>
    </location>
    <ligand>
        <name>ATP</name>
        <dbReference type="ChEBI" id="CHEBI:30616"/>
    </ligand>
</feature>
<feature type="binding site" evidence="1">
    <location>
        <position position="73"/>
    </location>
    <ligand>
        <name>ATP</name>
        <dbReference type="ChEBI" id="CHEBI:30616"/>
    </ligand>
</feature>
<feature type="binding site" evidence="1">
    <location>
        <position position="73"/>
    </location>
    <ligand>
        <name>Mg(2+)</name>
        <dbReference type="ChEBI" id="CHEBI:18420"/>
    </ligand>
</feature>
<feature type="binding site" evidence="1">
    <location>
        <position position="141"/>
    </location>
    <ligand>
        <name>Mg(2+)</name>
        <dbReference type="ChEBI" id="CHEBI:18420"/>
    </ligand>
</feature>
<feature type="binding site" evidence="1">
    <location>
        <begin position="148"/>
        <end position="150"/>
    </location>
    <ligand>
        <name>CTP</name>
        <dbReference type="ChEBI" id="CHEBI:37563"/>
        <note>allosteric inhibitor</note>
    </ligand>
</feature>
<feature type="binding site" evidence="1">
    <location>
        <begin position="188"/>
        <end position="193"/>
    </location>
    <ligand>
        <name>CTP</name>
        <dbReference type="ChEBI" id="CHEBI:37563"/>
        <note>allosteric inhibitor</note>
    </ligand>
</feature>
<feature type="binding site" evidence="1">
    <location>
        <begin position="188"/>
        <end position="193"/>
    </location>
    <ligand>
        <name>UTP</name>
        <dbReference type="ChEBI" id="CHEBI:46398"/>
    </ligand>
</feature>
<feature type="binding site" evidence="1">
    <location>
        <position position="224"/>
    </location>
    <ligand>
        <name>CTP</name>
        <dbReference type="ChEBI" id="CHEBI:37563"/>
        <note>allosteric inhibitor</note>
    </ligand>
</feature>
<feature type="binding site" evidence="1">
    <location>
        <position position="224"/>
    </location>
    <ligand>
        <name>UTP</name>
        <dbReference type="ChEBI" id="CHEBI:46398"/>
    </ligand>
</feature>
<feature type="binding site" evidence="1">
    <location>
        <position position="351"/>
    </location>
    <ligand>
        <name>L-glutamine</name>
        <dbReference type="ChEBI" id="CHEBI:58359"/>
    </ligand>
</feature>
<feature type="binding site" evidence="1">
    <location>
        <begin position="379"/>
        <end position="382"/>
    </location>
    <ligand>
        <name>L-glutamine</name>
        <dbReference type="ChEBI" id="CHEBI:58359"/>
    </ligand>
</feature>
<feature type="binding site" evidence="1">
    <location>
        <position position="402"/>
    </location>
    <ligand>
        <name>L-glutamine</name>
        <dbReference type="ChEBI" id="CHEBI:58359"/>
    </ligand>
</feature>
<feature type="binding site" evidence="1">
    <location>
        <position position="469"/>
    </location>
    <ligand>
        <name>L-glutamine</name>
        <dbReference type="ChEBI" id="CHEBI:58359"/>
    </ligand>
</feature>
<accession>O25116</accession>